<evidence type="ECO:0000255" key="1">
    <source>
        <dbReference type="HAMAP-Rule" id="MF_01445"/>
    </source>
</evidence>
<protein>
    <recommendedName>
        <fullName evidence="1">tRNA N6-adenosine threonylcarbamoyltransferase</fullName>
        <ecNumber evidence="1">2.3.1.234</ecNumber>
    </recommendedName>
    <alternativeName>
        <fullName evidence="1">N6-L-threonylcarbamoyladenine synthase</fullName>
        <shortName evidence="1">t(6)A synthase</shortName>
    </alternativeName>
    <alternativeName>
        <fullName evidence="1">t(6)A37 threonylcarbamoyladenosine biosynthesis protein TsaD</fullName>
    </alternativeName>
    <alternativeName>
        <fullName evidence="1">tRNA threonylcarbamoyladenosine biosynthesis protein TsaD</fullName>
    </alternativeName>
</protein>
<organism>
    <name type="scientific">Ehrlichia canis (strain Jake)</name>
    <dbReference type="NCBI Taxonomy" id="269484"/>
    <lineage>
        <taxon>Bacteria</taxon>
        <taxon>Pseudomonadati</taxon>
        <taxon>Pseudomonadota</taxon>
        <taxon>Alphaproteobacteria</taxon>
        <taxon>Rickettsiales</taxon>
        <taxon>Anaplasmataceae</taxon>
        <taxon>Ehrlichia</taxon>
    </lineage>
</organism>
<accession>Q3YS67</accession>
<keyword id="KW-0012">Acyltransferase</keyword>
<keyword id="KW-0963">Cytoplasm</keyword>
<keyword id="KW-0408">Iron</keyword>
<keyword id="KW-0479">Metal-binding</keyword>
<keyword id="KW-0808">Transferase</keyword>
<keyword id="KW-0819">tRNA processing</keyword>
<comment type="function">
    <text evidence="1">Required for the formation of a threonylcarbamoyl group on adenosine at position 37 (t(6)A37) in tRNAs that read codons beginning with adenine. Is involved in the transfer of the threonylcarbamoyl moiety of threonylcarbamoyl-AMP (TC-AMP) to the N6 group of A37, together with TsaE and TsaB. TsaD likely plays a direct catalytic role in this reaction.</text>
</comment>
<comment type="catalytic activity">
    <reaction evidence="1">
        <text>L-threonylcarbamoyladenylate + adenosine(37) in tRNA = N(6)-L-threonylcarbamoyladenosine(37) in tRNA + AMP + H(+)</text>
        <dbReference type="Rhea" id="RHEA:37059"/>
        <dbReference type="Rhea" id="RHEA-COMP:10162"/>
        <dbReference type="Rhea" id="RHEA-COMP:10163"/>
        <dbReference type="ChEBI" id="CHEBI:15378"/>
        <dbReference type="ChEBI" id="CHEBI:73682"/>
        <dbReference type="ChEBI" id="CHEBI:74411"/>
        <dbReference type="ChEBI" id="CHEBI:74418"/>
        <dbReference type="ChEBI" id="CHEBI:456215"/>
        <dbReference type="EC" id="2.3.1.234"/>
    </reaction>
</comment>
<comment type="cofactor">
    <cofactor evidence="1">
        <name>Fe(2+)</name>
        <dbReference type="ChEBI" id="CHEBI:29033"/>
    </cofactor>
    <text evidence="1">Binds 1 Fe(2+) ion per subunit.</text>
</comment>
<comment type="subcellular location">
    <subcellularLocation>
        <location evidence="1">Cytoplasm</location>
    </subcellularLocation>
</comment>
<comment type="similarity">
    <text evidence="1">Belongs to the KAE1 / TsaD family.</text>
</comment>
<sequence length="350" mass="38212">MKKSVKVVLGIETSCDETAVAIVNSNKEVLSHKILSQKEHAEYGGVVPEIASRAHINYLYDLTVSCIEESQLSLNNIDAVAVTSGPGLIGGLIVGVMIAKGIASVTGKPIIEINHLEAHALIVRMFYEINFPFLLLIISGGHCQFLIVYNVGCYHKLGSSLDDSLGEVFDKVAKMLNLGYPGGPVIEKKSLSGDSKSFVLPRALTGRCGCDFSFSGLKTAVRNIIMNHEYIDNKLICDISASFQECVGDILVNRINNAIAMSKAIDKRIDKLVVTGGVAANKLLRERMLRCASDNNFEIFYPPSKLCTDNGIMIGWAGIENLVKDYVSNLDFAPKARWPLESLRSNIMKE</sequence>
<reference key="1">
    <citation type="journal article" date="2006" name="J. Bacteriol.">
        <title>The genome of the obligately intracellular bacterium Ehrlichia canis reveals themes of complex membrane structure and immune evasion strategies.</title>
        <authorList>
            <person name="Mavromatis K."/>
            <person name="Doyle C.K."/>
            <person name="Lykidis A."/>
            <person name="Ivanova N."/>
            <person name="Francino M.P."/>
            <person name="Chain P."/>
            <person name="Shin M."/>
            <person name="Malfatti S."/>
            <person name="Larimer F."/>
            <person name="Copeland A."/>
            <person name="Detter J.C."/>
            <person name="Land M."/>
            <person name="Richardson P.M."/>
            <person name="Yu X.J."/>
            <person name="Walker D.H."/>
            <person name="McBride J.W."/>
            <person name="Kyrpides N.C."/>
        </authorList>
    </citation>
    <scope>NUCLEOTIDE SEQUENCE [LARGE SCALE GENOMIC DNA]</scope>
    <source>
        <strain>Jake</strain>
    </source>
</reference>
<dbReference type="EC" id="2.3.1.234" evidence="1"/>
<dbReference type="EMBL" id="CP000107">
    <property type="protein sequence ID" value="AAZ68438.1"/>
    <property type="molecule type" value="Genomic_DNA"/>
</dbReference>
<dbReference type="RefSeq" id="WP_011304516.1">
    <property type="nucleotide sequence ID" value="NC_007354.1"/>
</dbReference>
<dbReference type="SMR" id="Q3YS67"/>
<dbReference type="FunCoup" id="Q3YS67">
    <property type="interactions" value="324"/>
</dbReference>
<dbReference type="STRING" id="269484.Ecaj_0395"/>
<dbReference type="KEGG" id="ecn:Ecaj_0395"/>
<dbReference type="eggNOG" id="COG0533">
    <property type="taxonomic scope" value="Bacteria"/>
</dbReference>
<dbReference type="HOGENOM" id="CLU_023208_0_2_5"/>
<dbReference type="InParanoid" id="Q3YS67"/>
<dbReference type="Proteomes" id="UP000000435">
    <property type="component" value="Chromosome"/>
</dbReference>
<dbReference type="GO" id="GO:0005737">
    <property type="term" value="C:cytoplasm"/>
    <property type="evidence" value="ECO:0007669"/>
    <property type="project" value="UniProtKB-SubCell"/>
</dbReference>
<dbReference type="GO" id="GO:0005506">
    <property type="term" value="F:iron ion binding"/>
    <property type="evidence" value="ECO:0007669"/>
    <property type="project" value="UniProtKB-UniRule"/>
</dbReference>
<dbReference type="GO" id="GO:0061711">
    <property type="term" value="F:N(6)-L-threonylcarbamoyladenine synthase activity"/>
    <property type="evidence" value="ECO:0007669"/>
    <property type="project" value="UniProtKB-EC"/>
</dbReference>
<dbReference type="GO" id="GO:0002949">
    <property type="term" value="P:tRNA threonylcarbamoyladenosine modification"/>
    <property type="evidence" value="ECO:0007669"/>
    <property type="project" value="UniProtKB-UniRule"/>
</dbReference>
<dbReference type="CDD" id="cd24133">
    <property type="entry name" value="ASKHA_NBD_TsaD_bac"/>
    <property type="match status" value="1"/>
</dbReference>
<dbReference type="FunFam" id="3.30.420.40:FF:000012">
    <property type="entry name" value="tRNA N6-adenosine threonylcarbamoyltransferase"/>
    <property type="match status" value="1"/>
</dbReference>
<dbReference type="Gene3D" id="3.30.420.40">
    <property type="match status" value="2"/>
</dbReference>
<dbReference type="HAMAP" id="MF_01445">
    <property type="entry name" value="TsaD"/>
    <property type="match status" value="1"/>
</dbReference>
<dbReference type="InterPro" id="IPR043129">
    <property type="entry name" value="ATPase_NBD"/>
</dbReference>
<dbReference type="InterPro" id="IPR000905">
    <property type="entry name" value="Gcp-like_dom"/>
</dbReference>
<dbReference type="InterPro" id="IPR017861">
    <property type="entry name" value="KAE1/TsaD"/>
</dbReference>
<dbReference type="InterPro" id="IPR022450">
    <property type="entry name" value="TsaD"/>
</dbReference>
<dbReference type="NCBIfam" id="TIGR00329">
    <property type="entry name" value="gcp_kae1"/>
    <property type="match status" value="1"/>
</dbReference>
<dbReference type="NCBIfam" id="TIGR03723">
    <property type="entry name" value="T6A_TsaD_YgjD"/>
    <property type="match status" value="1"/>
</dbReference>
<dbReference type="PANTHER" id="PTHR11735">
    <property type="entry name" value="TRNA N6-ADENOSINE THREONYLCARBAMOYLTRANSFERASE"/>
    <property type="match status" value="1"/>
</dbReference>
<dbReference type="PANTHER" id="PTHR11735:SF6">
    <property type="entry name" value="TRNA N6-ADENOSINE THREONYLCARBAMOYLTRANSFERASE, MITOCHONDRIAL"/>
    <property type="match status" value="1"/>
</dbReference>
<dbReference type="Pfam" id="PF00814">
    <property type="entry name" value="TsaD"/>
    <property type="match status" value="1"/>
</dbReference>
<dbReference type="PRINTS" id="PR00789">
    <property type="entry name" value="OSIALOPTASE"/>
</dbReference>
<dbReference type="SUPFAM" id="SSF53067">
    <property type="entry name" value="Actin-like ATPase domain"/>
    <property type="match status" value="1"/>
</dbReference>
<proteinExistence type="inferred from homology"/>
<feature type="chain" id="PRO_0000303352" description="tRNA N6-adenosine threonylcarbamoyltransferase">
    <location>
        <begin position="1"/>
        <end position="350"/>
    </location>
</feature>
<feature type="binding site" evidence="1">
    <location>
        <position position="115"/>
    </location>
    <ligand>
        <name>Fe cation</name>
        <dbReference type="ChEBI" id="CHEBI:24875"/>
    </ligand>
</feature>
<feature type="binding site" evidence="1">
    <location>
        <position position="119"/>
    </location>
    <ligand>
        <name>Fe cation</name>
        <dbReference type="ChEBI" id="CHEBI:24875"/>
    </ligand>
</feature>
<feature type="binding site" evidence="1">
    <location>
        <begin position="137"/>
        <end position="141"/>
    </location>
    <ligand>
        <name>substrate</name>
    </ligand>
</feature>
<feature type="binding site" evidence="1">
    <location>
        <position position="170"/>
    </location>
    <ligand>
        <name>substrate</name>
    </ligand>
</feature>
<feature type="binding site" evidence="1">
    <location>
        <position position="183"/>
    </location>
    <ligand>
        <name>substrate</name>
    </ligand>
</feature>
<feature type="binding site" evidence="1">
    <location>
        <position position="281"/>
    </location>
    <ligand>
        <name>substrate</name>
    </ligand>
</feature>
<feature type="binding site" evidence="1">
    <location>
        <position position="309"/>
    </location>
    <ligand>
        <name>Fe cation</name>
        <dbReference type="ChEBI" id="CHEBI:24875"/>
    </ligand>
</feature>
<gene>
    <name evidence="1" type="primary">tsaD</name>
    <name type="synonym">gcp</name>
    <name type="ordered locus">Ecaj_0395</name>
</gene>
<name>TSAD_EHRCJ</name>